<keyword id="KW-0004">4Fe-4S</keyword>
<keyword id="KW-0067">ATP-binding</keyword>
<keyword id="KW-0149">Chlorophyll biosynthesis</keyword>
<keyword id="KW-0150">Chloroplast</keyword>
<keyword id="KW-0408">Iron</keyword>
<keyword id="KW-0411">Iron-sulfur</keyword>
<keyword id="KW-0479">Metal-binding</keyword>
<keyword id="KW-0547">Nucleotide-binding</keyword>
<keyword id="KW-0560">Oxidoreductase</keyword>
<keyword id="KW-0602">Photosynthesis</keyword>
<keyword id="KW-0934">Plastid</keyword>
<feature type="chain" id="PRO_0000324037" description="Light-independent protochlorophyllide reductase subunit N">
    <location>
        <begin position="1"/>
        <end position="462"/>
    </location>
</feature>
<feature type="binding site" evidence="1">
    <location>
        <position position="24"/>
    </location>
    <ligand>
        <name>[4Fe-4S] cluster</name>
        <dbReference type="ChEBI" id="CHEBI:49883"/>
        <note>ligand shared with heterodimeric partner</note>
    </ligand>
</feature>
<feature type="binding site" evidence="1">
    <location>
        <position position="49"/>
    </location>
    <ligand>
        <name>[4Fe-4S] cluster</name>
        <dbReference type="ChEBI" id="CHEBI:49883"/>
        <note>ligand shared with heterodimeric partner</note>
    </ligand>
</feature>
<feature type="binding site" evidence="1">
    <location>
        <position position="109"/>
    </location>
    <ligand>
        <name>[4Fe-4S] cluster</name>
        <dbReference type="ChEBI" id="CHEBI:49883"/>
        <note>ligand shared with heterodimeric partner</note>
    </ligand>
</feature>
<accession>A6YGA5</accession>
<gene>
    <name evidence="1" type="primary">chlN</name>
</gene>
<organism>
    <name type="scientific">Pleurastrum terricola</name>
    <name type="common">Filamentous green alga</name>
    <name type="synonym">Leptosira terrestris</name>
    <dbReference type="NCBI Taxonomy" id="34116"/>
    <lineage>
        <taxon>Eukaryota</taxon>
        <taxon>Viridiplantae</taxon>
        <taxon>Chlorophyta</taxon>
        <taxon>core chlorophytes</taxon>
        <taxon>Chlorophyceae</taxon>
        <taxon>CS clade</taxon>
        <taxon>Chlamydomonadales</taxon>
        <taxon>Pleurastraceae</taxon>
        <taxon>Pleurastrum</taxon>
    </lineage>
</organism>
<comment type="function">
    <text evidence="1">Component of the dark-operative protochlorophyllide reductase (DPOR) that uses Mg-ATP and reduced ferredoxin to reduce ring D of protochlorophyllide (Pchlide) to form chlorophyllide a (Chlide). This reaction is light-independent. The NB-protein (ChlN-ChlB) is the catalytic component of the complex.</text>
</comment>
<comment type="catalytic activity">
    <reaction evidence="1">
        <text>chlorophyllide a + oxidized 2[4Fe-4S]-[ferredoxin] + 2 ADP + 2 phosphate = protochlorophyllide a + reduced 2[4Fe-4S]-[ferredoxin] + 2 ATP + 2 H2O</text>
        <dbReference type="Rhea" id="RHEA:28202"/>
        <dbReference type="Rhea" id="RHEA-COMP:10002"/>
        <dbReference type="Rhea" id="RHEA-COMP:10004"/>
        <dbReference type="ChEBI" id="CHEBI:15377"/>
        <dbReference type="ChEBI" id="CHEBI:30616"/>
        <dbReference type="ChEBI" id="CHEBI:33722"/>
        <dbReference type="ChEBI" id="CHEBI:33723"/>
        <dbReference type="ChEBI" id="CHEBI:43474"/>
        <dbReference type="ChEBI" id="CHEBI:83348"/>
        <dbReference type="ChEBI" id="CHEBI:83350"/>
        <dbReference type="ChEBI" id="CHEBI:456216"/>
        <dbReference type="EC" id="1.3.7.7"/>
    </reaction>
</comment>
<comment type="cofactor">
    <cofactor evidence="1">
        <name>[4Fe-4S] cluster</name>
        <dbReference type="ChEBI" id="CHEBI:49883"/>
    </cofactor>
    <text evidence="1">Binds 1 [4Fe-4S] cluster per heterodimer. The cluster is bound at the heterodimer interface by residues from both subunits.</text>
</comment>
<comment type="pathway">
    <text evidence="1">Porphyrin-containing compound metabolism; chlorophyll biosynthesis (light-independent).</text>
</comment>
<comment type="subunit">
    <text evidence="1">Protochlorophyllide reductase is composed of three subunits; ChlL, ChlN and ChlB. Forms a heterotetramer of two ChlB and two ChlN subunits.</text>
</comment>
<comment type="subcellular location">
    <subcellularLocation>
        <location>Plastid</location>
        <location>Chloroplast</location>
    </subcellularLocation>
</comment>
<comment type="similarity">
    <text evidence="1">Belongs to the BchN/ChlN family.</text>
</comment>
<sequence length="462" mass="52259">MTATFKKEVNLVFECETGNYHTFCPISCVAWLYQKIEDSFFLVIGTKTCGYFLQNALGVMIFAEPRYAMAELEEGDISAQLNDYKELKRLCLQIKQDRNPSVIVWIGTCTTEIIKMDLEGMAPRLESEIDIPIVVARANGLDYAFTQGEDTVLAAMVNRCPKKDQLTKPLQAVSFIDTDSLQKEKGPKYDSINHDKDLVLFGSLPSTVVTQLNLELQRQDIKVSGWLPSQRYSDLPILDSGVYVCGVNPFLSRTAATLMRRRKCKLIGAPFPIGPDGTRAWVEKICSVFGKQPQGLEQREAEIWKGLEDYLQLVRGKSVFFMGDNLLEVSLARFLIRCGMIVYEIGIPYMDKRFQAAELAFLEKTCHDMNVPMPRIVEKPDNYNQIQRIKELQPDLAITGMAHANPLEARGISTKWSVEFTFAQIHGFTNSRDILELVTRPLRRNNSLEGSLGWTQLVKSTV</sequence>
<name>CHLN_PLETE</name>
<geneLocation type="chloroplast"/>
<evidence type="ECO:0000255" key="1">
    <source>
        <dbReference type="HAMAP-Rule" id="MF_00352"/>
    </source>
</evidence>
<protein>
    <recommendedName>
        <fullName evidence="1">Light-independent protochlorophyllide reductase subunit N</fullName>
        <shortName evidence="1">DPOR subunit N</shortName>
        <shortName evidence="1">LI-POR subunit N</shortName>
        <ecNumber evidence="1">1.3.7.7</ecNumber>
    </recommendedName>
</protein>
<proteinExistence type="inferred from homology"/>
<reference key="1">
    <citation type="journal article" date="2007" name="BMC Genomics">
        <title>The chloroplast genome sequence of the green alga Leptosira terrestris: multiple losses of the inverted repeat and extensive genome rearrangements within the Trebouxiophyceae.</title>
        <authorList>
            <person name="de Cambiaire J.-C."/>
            <person name="Otis C."/>
            <person name="Turmel M."/>
            <person name="Lemieux C."/>
        </authorList>
    </citation>
    <scope>NUCLEOTIDE SEQUENCE [LARGE SCALE GENOMIC DNA]</scope>
    <source>
        <strain>CCAP 463/2 / UTEX 333</strain>
    </source>
</reference>
<dbReference type="EC" id="1.3.7.7" evidence="1"/>
<dbReference type="EMBL" id="EF506945">
    <property type="protein sequence ID" value="ABO69321.1"/>
    <property type="molecule type" value="Genomic_DNA"/>
</dbReference>
<dbReference type="RefSeq" id="YP_001382182.1">
    <property type="nucleotide sequence ID" value="NC_009681.1"/>
</dbReference>
<dbReference type="SMR" id="A6YGA5"/>
<dbReference type="GeneID" id="5383783"/>
<dbReference type="UniPathway" id="UPA00670"/>
<dbReference type="GO" id="GO:0009507">
    <property type="term" value="C:chloroplast"/>
    <property type="evidence" value="ECO:0007669"/>
    <property type="project" value="UniProtKB-SubCell"/>
</dbReference>
<dbReference type="GO" id="GO:0051539">
    <property type="term" value="F:4 iron, 4 sulfur cluster binding"/>
    <property type="evidence" value="ECO:0007669"/>
    <property type="project" value="UniProtKB-UniRule"/>
</dbReference>
<dbReference type="GO" id="GO:0005524">
    <property type="term" value="F:ATP binding"/>
    <property type="evidence" value="ECO:0007669"/>
    <property type="project" value="UniProtKB-UniRule"/>
</dbReference>
<dbReference type="GO" id="GO:0046872">
    <property type="term" value="F:metal ion binding"/>
    <property type="evidence" value="ECO:0007669"/>
    <property type="project" value="UniProtKB-KW"/>
</dbReference>
<dbReference type="GO" id="GO:0016730">
    <property type="term" value="F:oxidoreductase activity, acting on iron-sulfur proteins as donors"/>
    <property type="evidence" value="ECO:0007669"/>
    <property type="project" value="InterPro"/>
</dbReference>
<dbReference type="GO" id="GO:0016636">
    <property type="term" value="F:oxidoreductase activity, acting on the CH-CH group of donors, iron-sulfur protein as acceptor"/>
    <property type="evidence" value="ECO:0007669"/>
    <property type="project" value="UniProtKB-UniRule"/>
</dbReference>
<dbReference type="GO" id="GO:0036068">
    <property type="term" value="P:light-independent chlorophyll biosynthetic process"/>
    <property type="evidence" value="ECO:0007669"/>
    <property type="project" value="UniProtKB-UniRule"/>
</dbReference>
<dbReference type="GO" id="GO:0019685">
    <property type="term" value="P:photosynthesis, dark reaction"/>
    <property type="evidence" value="ECO:0007669"/>
    <property type="project" value="InterPro"/>
</dbReference>
<dbReference type="CDD" id="cd01979">
    <property type="entry name" value="Pchlide_reductase_N"/>
    <property type="match status" value="1"/>
</dbReference>
<dbReference type="Gene3D" id="3.40.50.1980">
    <property type="entry name" value="Nitrogenase molybdenum iron protein domain"/>
    <property type="match status" value="3"/>
</dbReference>
<dbReference type="HAMAP" id="MF_00352">
    <property type="entry name" value="ChlN_BchN"/>
    <property type="match status" value="1"/>
</dbReference>
<dbReference type="InterPro" id="IPR050293">
    <property type="entry name" value="LIPOR_BchN/ChlN"/>
</dbReference>
<dbReference type="InterPro" id="IPR000510">
    <property type="entry name" value="Nase/OxRdtase_comp1"/>
</dbReference>
<dbReference type="InterPro" id="IPR005970">
    <property type="entry name" value="Protochl_reductN"/>
</dbReference>
<dbReference type="NCBIfam" id="TIGR01279">
    <property type="entry name" value="DPOR_bchN"/>
    <property type="match status" value="1"/>
</dbReference>
<dbReference type="NCBIfam" id="NF002768">
    <property type="entry name" value="PRK02842.1"/>
    <property type="match status" value="1"/>
</dbReference>
<dbReference type="PANTHER" id="PTHR39429">
    <property type="entry name" value="LIGHT-INDEPENDENT PROTOCHLOROPHYLLIDE REDUCTASE SUBUNIT N"/>
    <property type="match status" value="1"/>
</dbReference>
<dbReference type="PANTHER" id="PTHR39429:SF3">
    <property type="entry name" value="LIGHT-INDEPENDENT PROTOCHLOROPHYLLIDE REDUCTASE SUBUNIT N"/>
    <property type="match status" value="1"/>
</dbReference>
<dbReference type="Pfam" id="PF00148">
    <property type="entry name" value="Oxidored_nitro"/>
    <property type="match status" value="1"/>
</dbReference>
<dbReference type="PIRSF" id="PIRSF000162">
    <property type="entry name" value="P_chlorophyll_rd"/>
    <property type="match status" value="1"/>
</dbReference>
<dbReference type="SUPFAM" id="SSF53807">
    <property type="entry name" value="Helical backbone' metal receptor"/>
    <property type="match status" value="1"/>
</dbReference>